<reference key="1">
    <citation type="journal article" date="1998" name="Proc. Natl. Acad. Sci. U.S.A.">
        <title>Cloning and characterization of a gene from Escherichia coli encoding a transketolase-like enzyme that catalyzes the synthesis of D-1-deoxyxylulose 5-phosphate, a common precursor for isoprenoid, thiamin, and pyridoxol biosynthesis.</title>
        <authorList>
            <person name="Lois L.M."/>
            <person name="Campos N."/>
            <person name="Rosa Putra S."/>
            <person name="Danielsen K."/>
            <person name="Rohmer M."/>
            <person name="Boronat A."/>
        </authorList>
    </citation>
    <scope>NUCLEOTIDE SEQUENCE [GENOMIC DNA]</scope>
    <scope>FUNCTION</scope>
    <scope>CATALYTIC ACTIVITY</scope>
    <source>
        <strain>K12</strain>
    </source>
</reference>
<reference key="2">
    <citation type="submission" date="1997-01" db="EMBL/GenBank/DDBJ databases">
        <title>Sequence of minutes 4-25 of Escherichia coli.</title>
        <authorList>
            <person name="Chung E."/>
            <person name="Allen E."/>
            <person name="Araujo R."/>
            <person name="Aparicio A.M."/>
            <person name="Davis K."/>
            <person name="Duncan M."/>
            <person name="Federspiel N."/>
            <person name="Hyman R."/>
            <person name="Kalman S."/>
            <person name="Komp C."/>
            <person name="Kurdi O."/>
            <person name="Lew H."/>
            <person name="Lin D."/>
            <person name="Namath A."/>
            <person name="Oefner P."/>
            <person name="Roberts D."/>
            <person name="Schramm S."/>
            <person name="Davis R.W."/>
        </authorList>
    </citation>
    <scope>NUCLEOTIDE SEQUENCE [LARGE SCALE GENOMIC DNA]</scope>
    <source>
        <strain>K12 / MG1655 / ATCC 47076</strain>
    </source>
</reference>
<reference key="3">
    <citation type="journal article" date="1997" name="Science">
        <title>The complete genome sequence of Escherichia coli K-12.</title>
        <authorList>
            <person name="Blattner F.R."/>
            <person name="Plunkett G. III"/>
            <person name="Bloch C.A."/>
            <person name="Perna N.T."/>
            <person name="Burland V."/>
            <person name="Riley M."/>
            <person name="Collado-Vides J."/>
            <person name="Glasner J.D."/>
            <person name="Rode C.K."/>
            <person name="Mayhew G.F."/>
            <person name="Gregor J."/>
            <person name="Davis N.W."/>
            <person name="Kirkpatrick H.A."/>
            <person name="Goeden M.A."/>
            <person name="Rose D.J."/>
            <person name="Mau B."/>
            <person name="Shao Y."/>
        </authorList>
    </citation>
    <scope>NUCLEOTIDE SEQUENCE [LARGE SCALE GENOMIC DNA]</scope>
    <source>
        <strain>K12 / MG1655 / ATCC 47076</strain>
    </source>
</reference>
<reference key="4">
    <citation type="journal article" date="2006" name="Mol. Syst. Biol.">
        <title>Highly accurate genome sequences of Escherichia coli K-12 strains MG1655 and W3110.</title>
        <authorList>
            <person name="Hayashi K."/>
            <person name="Morooka N."/>
            <person name="Yamamoto Y."/>
            <person name="Fujita K."/>
            <person name="Isono K."/>
            <person name="Choi S."/>
            <person name="Ohtsubo E."/>
            <person name="Baba T."/>
            <person name="Wanner B.L."/>
            <person name="Mori H."/>
            <person name="Horiuchi T."/>
        </authorList>
    </citation>
    <scope>NUCLEOTIDE SEQUENCE [LARGE SCALE GENOMIC DNA]</scope>
    <source>
        <strain>K12 / W3110 / ATCC 27325 / DSM 5911</strain>
    </source>
</reference>
<reference key="5">
    <citation type="journal article" date="1997" name="Proc. Natl. Acad. Sci. U.S.A.">
        <title>Identification of a thiamin-dependent synthase in Escherichia coli required for the formation of the 1-deoxy-D-xylulose 5-phosphate precursor to isoprenoids, thiamin, and pyridoxol.</title>
        <authorList>
            <person name="Sprenger G.A."/>
            <person name="Schorken U."/>
            <person name="Wiegert T."/>
            <person name="Grolle S."/>
            <person name="de Graaf A.A."/>
            <person name="Taylor S.V."/>
            <person name="Begley T.P."/>
            <person name="Bringer-Meyer S."/>
            <person name="Sahm H."/>
        </authorList>
    </citation>
    <scope>PROTEIN SEQUENCE OF 2-7</scope>
    <scope>FUNCTION</scope>
    <scope>CATALYTIC ACTIVITY</scope>
    <scope>COFACTOR</scope>
</reference>
<reference key="6">
    <citation type="journal article" date="2000" name="J. Bacteriol.">
        <title>Cloning and characterization of 1-deoxy-D-xylulose 5-phosphate synthase from Streptomyces sp. strain CL190, which uses both the mevalonate and nonmevalonate pathways for isopentenyl diphosphate biosynthesis.</title>
        <authorList>
            <person name="Kuzuyama T."/>
            <person name="Takagi M."/>
            <person name="Takahashi S."/>
            <person name="Seto H."/>
        </authorList>
    </citation>
    <scope>CHARACTERIZATION</scope>
</reference>
<reference key="7">
    <citation type="journal article" date="2007" name="J. Biol. Chem.">
        <title>Crystal structure of 1-deoxy-D-xylulose 5-phosphate synthase, a crucial enzyme for isoprenoids biosynthesis.</title>
        <authorList>
            <person name="Xiang S."/>
            <person name="Usunow G."/>
            <person name="Lange G."/>
            <person name="Busch M."/>
            <person name="Tong L."/>
        </authorList>
    </citation>
    <scope>X-RAY CRYSTALLOGRAPHY (2.40 ANGSTROMS) IN COMPLEX WITH MAGNESIUM AND THIAMINE PYROPHOSPHATE</scope>
    <scope>FUNCTION</scope>
    <scope>COFACTOR</scope>
    <scope>SUBUNIT</scope>
    <scope>MUTAGENESIS OF GLU-370; TYR-392; ARG-398; HIS-431 AND ARG-478</scope>
</reference>
<comment type="function">
    <text evidence="1 2 3">Catalyzes the acyloin condensation reaction between C atoms 2 and 3 of pyruvate and glyceraldehyde 3-phosphate to yield 1-deoxy-D-xylulose-5-phosphate (DXP).</text>
</comment>
<comment type="catalytic activity">
    <reaction evidence="2 3">
        <text>D-glyceraldehyde 3-phosphate + pyruvate + H(+) = 1-deoxy-D-xylulose 5-phosphate + CO2</text>
        <dbReference type="Rhea" id="RHEA:12605"/>
        <dbReference type="ChEBI" id="CHEBI:15361"/>
        <dbReference type="ChEBI" id="CHEBI:15378"/>
        <dbReference type="ChEBI" id="CHEBI:16526"/>
        <dbReference type="ChEBI" id="CHEBI:57792"/>
        <dbReference type="ChEBI" id="CHEBI:59776"/>
        <dbReference type="EC" id="2.2.1.7"/>
    </reaction>
    <physiologicalReaction direction="left-to-right" evidence="7 8">
        <dbReference type="Rhea" id="RHEA:12606"/>
    </physiologicalReaction>
</comment>
<comment type="cofactor">
    <cofactor evidence="1">
        <name>Mg(2+)</name>
        <dbReference type="ChEBI" id="CHEBI:18420"/>
    </cofactor>
    <text evidence="1">Binds 1 Mg(2+) ion per subunit.</text>
</comment>
<comment type="cofactor">
    <cofactor evidence="1 2">
        <name>thiamine diphosphate</name>
        <dbReference type="ChEBI" id="CHEBI:58937"/>
    </cofactor>
    <text evidence="1">Binds 1 thiamine pyrophosphate per subunit.</text>
</comment>
<comment type="biophysicochemical properties">
    <phDependence>
        <text>Optimum pH is 7.5-8.0.</text>
    </phDependence>
    <temperatureDependence>
        <text>Optimum temperature is 42-44 degrees Celsius.</text>
    </temperatureDependence>
</comment>
<comment type="pathway">
    <text>Metabolic intermediate biosynthesis; 1-deoxy-D-xylulose 5-phosphate biosynthesis; 1-deoxy-D-xylulose 5-phosphate from D-glyceraldehyde 3-phosphate and pyruvate: step 1/1.</text>
</comment>
<comment type="subunit">
    <text evidence="1">Homodimer.</text>
</comment>
<comment type="similarity">
    <text evidence="6">Belongs to the transketolase family. DXPS subfamily.</text>
</comment>
<accession>P77488</accession>
<accession>Q2MC06</accession>
<organism>
    <name type="scientific">Escherichia coli (strain K12)</name>
    <dbReference type="NCBI Taxonomy" id="83333"/>
    <lineage>
        <taxon>Bacteria</taxon>
        <taxon>Pseudomonadati</taxon>
        <taxon>Pseudomonadota</taxon>
        <taxon>Gammaproteobacteria</taxon>
        <taxon>Enterobacterales</taxon>
        <taxon>Enterobacteriaceae</taxon>
        <taxon>Escherichia</taxon>
    </lineage>
</organism>
<name>DXS_ECOLI</name>
<sequence length="620" mass="67617">MSFDIAKYPTLALVDSTQELRLLPKESLPKLCDELRRYLLDSVSRSSGHFASGLGTVELTVALHYVYNTPFDQLIWDVGHQAYPHKILTGRRDKIGTIRQKGGLHPFPWRGESEYDVLSVGHSSTSISAGIGIAVAAEKEGKNRRTVCVIGDGAITAGMAFEAMNHAGDIRPDMLVILNDNEMSISENVGALNNHLAQLLSGKLYSSLREGGKKVFSGVPPIKELLKRTEEHIKGMVVPGTLFEELGFNYIGPVDGHDVLGLITTLKNMRDLKGPQFLHIMTKKGRGYEPAEKDPITFHAVPKFDPSSGCLPKSSGGLPSYSKIFGDWLCETAAKDNKLMAITPAMREGSGMVEFSRKFPDRYFDVAIAEQHAVTFAAGLAIGGYKPIVAIYSTFLQRAYDQVLHDVAIQKLPVLFAIDRAGIVGADGQTHQGAFDLSYLRCIPEMVIMTPSDENECRQMLYTGYHYNDGPSAVRYPRGNAVGVELTPLEKLPIGKGIVKRRGEKLAILNFGTLMPEAAKVAESLNATLVDMRFVKPLDEALILEMAASHEALVTVEENAIMGGAGSGVNEVLMAHRKPVPVLNIGLPDFFIPQGTQEEMRAELGLDAAGMEAKIKAWLA</sequence>
<keyword id="KW-0002">3D-structure</keyword>
<keyword id="KW-0903">Direct protein sequencing</keyword>
<keyword id="KW-0414">Isoprene biosynthesis</keyword>
<keyword id="KW-0460">Magnesium</keyword>
<keyword id="KW-0479">Metal-binding</keyword>
<keyword id="KW-1185">Reference proteome</keyword>
<keyword id="KW-0784">Thiamine biosynthesis</keyword>
<keyword id="KW-0786">Thiamine pyrophosphate</keyword>
<keyword id="KW-0808">Transferase</keyword>
<gene>
    <name evidence="5" type="primary">dxs</name>
    <name type="synonym">yajP</name>
    <name type="ordered locus">b0420</name>
    <name type="ordered locus">JW0410</name>
</gene>
<protein>
    <recommendedName>
        <fullName evidence="4 8">1-deoxy-D-xylulose-5-phosphate synthase</fullName>
        <ecNumber evidence="2 3">2.2.1.7</ecNumber>
    </recommendedName>
    <alternativeName>
        <fullName evidence="4">1-deoxyxylulose-5-phosphate synthase</fullName>
        <shortName evidence="4">DXP synthase</shortName>
        <shortName>DXPS</shortName>
    </alternativeName>
</protein>
<proteinExistence type="evidence at protein level"/>
<dbReference type="EC" id="2.2.1.7" evidence="2 3"/>
<dbReference type="EMBL" id="AF035440">
    <property type="protein sequence ID" value="AAC46162.1"/>
    <property type="molecule type" value="Genomic_DNA"/>
</dbReference>
<dbReference type="EMBL" id="U82664">
    <property type="protein sequence ID" value="AAB40176.1"/>
    <property type="molecule type" value="Genomic_DNA"/>
</dbReference>
<dbReference type="EMBL" id="U00096">
    <property type="protein sequence ID" value="AAC73523.1"/>
    <property type="molecule type" value="Genomic_DNA"/>
</dbReference>
<dbReference type="EMBL" id="AP009048">
    <property type="protein sequence ID" value="BAE76200.1"/>
    <property type="molecule type" value="Genomic_DNA"/>
</dbReference>
<dbReference type="PIR" id="D64771">
    <property type="entry name" value="D64771"/>
</dbReference>
<dbReference type="RefSeq" id="NP_414954.1">
    <property type="nucleotide sequence ID" value="NC_000913.3"/>
</dbReference>
<dbReference type="RefSeq" id="WP_000006797.1">
    <property type="nucleotide sequence ID" value="NZ_SSZK01000009.1"/>
</dbReference>
<dbReference type="PDB" id="2O1S">
    <property type="method" value="X-ray"/>
    <property type="resolution" value="2.40 A"/>
    <property type="chains" value="A/B/C/D=1-620"/>
</dbReference>
<dbReference type="PDBsum" id="2O1S"/>
<dbReference type="SMR" id="P77488"/>
<dbReference type="BioGRID" id="4259592">
    <property type="interactions" value="371"/>
</dbReference>
<dbReference type="DIP" id="DIP-9485N"/>
<dbReference type="FunCoup" id="P77488">
    <property type="interactions" value="673"/>
</dbReference>
<dbReference type="IntAct" id="P77488">
    <property type="interactions" value="19"/>
</dbReference>
<dbReference type="MINT" id="P77488"/>
<dbReference type="STRING" id="511145.b0420"/>
<dbReference type="BindingDB" id="P77488"/>
<dbReference type="ChEMBL" id="CHEMBL3217381"/>
<dbReference type="jPOST" id="P77488"/>
<dbReference type="PaxDb" id="511145-b0420"/>
<dbReference type="EnsemblBacteria" id="AAC73523">
    <property type="protein sequence ID" value="AAC73523"/>
    <property type="gene ID" value="b0420"/>
</dbReference>
<dbReference type="GeneID" id="945060"/>
<dbReference type="KEGG" id="ecj:JW0410"/>
<dbReference type="KEGG" id="eco:b0420"/>
<dbReference type="KEGG" id="ecoc:C3026_02050"/>
<dbReference type="PATRIC" id="fig|1411691.4.peg.1857"/>
<dbReference type="EchoBASE" id="EB3378"/>
<dbReference type="eggNOG" id="COG1154">
    <property type="taxonomic scope" value="Bacteria"/>
</dbReference>
<dbReference type="HOGENOM" id="CLU_009227_1_4_6"/>
<dbReference type="InParanoid" id="P77488"/>
<dbReference type="OMA" id="QVGYHAQ"/>
<dbReference type="OrthoDB" id="9803371at2"/>
<dbReference type="PhylomeDB" id="P77488"/>
<dbReference type="BioCyc" id="EcoCyc:DXS-MONOMER"/>
<dbReference type="BioCyc" id="MetaCyc:DXS-MONOMER"/>
<dbReference type="BRENDA" id="2.2.1.7">
    <property type="organism ID" value="2026"/>
</dbReference>
<dbReference type="SABIO-RK" id="P77488"/>
<dbReference type="UniPathway" id="UPA00064">
    <property type="reaction ID" value="UER00091"/>
</dbReference>
<dbReference type="EvolutionaryTrace" id="P77488"/>
<dbReference type="PRO" id="PR:P77488"/>
<dbReference type="Proteomes" id="UP000000625">
    <property type="component" value="Chromosome"/>
</dbReference>
<dbReference type="GO" id="GO:0005829">
    <property type="term" value="C:cytosol"/>
    <property type="evidence" value="ECO:0000314"/>
    <property type="project" value="EcoCyc"/>
</dbReference>
<dbReference type="GO" id="GO:0008661">
    <property type="term" value="F:1-deoxy-D-xylulose-5-phosphate synthase activity"/>
    <property type="evidence" value="ECO:0000314"/>
    <property type="project" value="EcoCyc"/>
</dbReference>
<dbReference type="GO" id="GO:0000287">
    <property type="term" value="F:magnesium ion binding"/>
    <property type="evidence" value="ECO:0007669"/>
    <property type="project" value="UniProtKB-UniRule"/>
</dbReference>
<dbReference type="GO" id="GO:0042803">
    <property type="term" value="F:protein homodimerization activity"/>
    <property type="evidence" value="ECO:0000314"/>
    <property type="project" value="EcoCyc"/>
</dbReference>
<dbReference type="GO" id="GO:0030976">
    <property type="term" value="F:thiamine pyrophosphate binding"/>
    <property type="evidence" value="ECO:0000314"/>
    <property type="project" value="EcoCyc"/>
</dbReference>
<dbReference type="GO" id="GO:0052865">
    <property type="term" value="P:1-deoxy-D-xylulose 5-phosphate biosynthetic process"/>
    <property type="evidence" value="ECO:0007669"/>
    <property type="project" value="UniProtKB-UniPathway"/>
</dbReference>
<dbReference type="GO" id="GO:0019288">
    <property type="term" value="P:isopentenyl diphosphate biosynthetic process, methylerythritol 4-phosphate pathway"/>
    <property type="evidence" value="ECO:0000315"/>
    <property type="project" value="EcoCyc"/>
</dbReference>
<dbReference type="GO" id="GO:0008299">
    <property type="term" value="P:isoprenoid biosynthetic process"/>
    <property type="evidence" value="ECO:0000315"/>
    <property type="project" value="EcoCyc"/>
</dbReference>
<dbReference type="GO" id="GO:0008615">
    <property type="term" value="P:pyridoxine biosynthetic process"/>
    <property type="evidence" value="ECO:0000314"/>
    <property type="project" value="EcoCyc"/>
</dbReference>
<dbReference type="GO" id="GO:0016114">
    <property type="term" value="P:terpenoid biosynthetic process"/>
    <property type="evidence" value="ECO:0007669"/>
    <property type="project" value="UniProtKB-UniRule"/>
</dbReference>
<dbReference type="GO" id="GO:0009228">
    <property type="term" value="P:thiamine biosynthetic process"/>
    <property type="evidence" value="ECO:0000315"/>
    <property type="project" value="EcoCyc"/>
</dbReference>
<dbReference type="GO" id="GO:0006744">
    <property type="term" value="P:ubiquinone biosynthetic process"/>
    <property type="evidence" value="ECO:0000314"/>
    <property type="project" value="EcoCyc"/>
</dbReference>
<dbReference type="CDD" id="cd02007">
    <property type="entry name" value="TPP_DXS"/>
    <property type="match status" value="1"/>
</dbReference>
<dbReference type="CDD" id="cd07033">
    <property type="entry name" value="TPP_PYR_DXS_TK_like"/>
    <property type="match status" value="1"/>
</dbReference>
<dbReference type="FunFam" id="3.40.50.920:FF:000002">
    <property type="entry name" value="1-deoxy-D-xylulose-5-phosphate synthase"/>
    <property type="match status" value="1"/>
</dbReference>
<dbReference type="FunFam" id="3.40.50.970:FF:000005">
    <property type="entry name" value="1-deoxy-D-xylulose-5-phosphate synthase"/>
    <property type="match status" value="1"/>
</dbReference>
<dbReference type="Gene3D" id="3.40.50.920">
    <property type="match status" value="1"/>
</dbReference>
<dbReference type="Gene3D" id="3.40.50.970">
    <property type="match status" value="2"/>
</dbReference>
<dbReference type="HAMAP" id="MF_00315">
    <property type="entry name" value="DXP_synth"/>
    <property type="match status" value="1"/>
</dbReference>
<dbReference type="InterPro" id="IPR005477">
    <property type="entry name" value="Dxylulose-5-P_synthase"/>
</dbReference>
<dbReference type="InterPro" id="IPR029061">
    <property type="entry name" value="THDP-binding"/>
</dbReference>
<dbReference type="InterPro" id="IPR009014">
    <property type="entry name" value="Transketo_C/PFOR_II"/>
</dbReference>
<dbReference type="InterPro" id="IPR005475">
    <property type="entry name" value="Transketolase-like_Pyr-bd"/>
</dbReference>
<dbReference type="InterPro" id="IPR020826">
    <property type="entry name" value="Transketolase_BS"/>
</dbReference>
<dbReference type="InterPro" id="IPR033248">
    <property type="entry name" value="Transketolase_C"/>
</dbReference>
<dbReference type="InterPro" id="IPR049557">
    <property type="entry name" value="Transketolase_CS"/>
</dbReference>
<dbReference type="NCBIfam" id="TIGR00204">
    <property type="entry name" value="dxs"/>
    <property type="match status" value="1"/>
</dbReference>
<dbReference type="NCBIfam" id="NF003933">
    <property type="entry name" value="PRK05444.2-2"/>
    <property type="match status" value="1"/>
</dbReference>
<dbReference type="PANTHER" id="PTHR43322">
    <property type="entry name" value="1-D-DEOXYXYLULOSE 5-PHOSPHATE SYNTHASE-RELATED"/>
    <property type="match status" value="1"/>
</dbReference>
<dbReference type="PANTHER" id="PTHR43322:SF5">
    <property type="entry name" value="1-DEOXY-D-XYLULOSE-5-PHOSPHATE SYNTHASE, CHLOROPLASTIC"/>
    <property type="match status" value="1"/>
</dbReference>
<dbReference type="Pfam" id="PF13292">
    <property type="entry name" value="DXP_synthase_N"/>
    <property type="match status" value="1"/>
</dbReference>
<dbReference type="Pfam" id="PF02779">
    <property type="entry name" value="Transket_pyr"/>
    <property type="match status" value="1"/>
</dbReference>
<dbReference type="Pfam" id="PF02780">
    <property type="entry name" value="Transketolase_C"/>
    <property type="match status" value="1"/>
</dbReference>
<dbReference type="SMART" id="SM00861">
    <property type="entry name" value="Transket_pyr"/>
    <property type="match status" value="1"/>
</dbReference>
<dbReference type="SUPFAM" id="SSF52518">
    <property type="entry name" value="Thiamin diphosphate-binding fold (THDP-binding)"/>
    <property type="match status" value="2"/>
</dbReference>
<dbReference type="SUPFAM" id="SSF52922">
    <property type="entry name" value="TK C-terminal domain-like"/>
    <property type="match status" value="1"/>
</dbReference>
<dbReference type="PROSITE" id="PS00801">
    <property type="entry name" value="TRANSKETOLASE_1"/>
    <property type="match status" value="1"/>
</dbReference>
<dbReference type="PROSITE" id="PS00802">
    <property type="entry name" value="TRANSKETOLASE_2"/>
    <property type="match status" value="1"/>
</dbReference>
<feature type="initiator methionine" description="Removed" evidence="2">
    <location>
        <position position="1"/>
    </location>
</feature>
<feature type="chain" id="PRO_0000189111" description="1-deoxy-D-xylulose-5-phosphate synthase">
    <location>
        <begin position="2"/>
        <end position="620"/>
    </location>
</feature>
<feature type="binding site" evidence="1">
    <location>
        <position position="80"/>
    </location>
    <ligand>
        <name>thiamine diphosphate</name>
        <dbReference type="ChEBI" id="CHEBI:58937"/>
    </ligand>
</feature>
<feature type="binding site">
    <location>
        <begin position="121"/>
        <end position="123"/>
    </location>
    <ligand>
        <name>thiamine diphosphate</name>
        <dbReference type="ChEBI" id="CHEBI:58937"/>
    </ligand>
</feature>
<feature type="binding site" evidence="1">
    <location>
        <position position="152"/>
    </location>
    <ligand>
        <name>Mg(2+)</name>
        <dbReference type="ChEBI" id="CHEBI:18420"/>
    </ligand>
</feature>
<feature type="binding site">
    <location>
        <begin position="153"/>
        <end position="154"/>
    </location>
    <ligand>
        <name>thiamine diphosphate</name>
        <dbReference type="ChEBI" id="CHEBI:58937"/>
    </ligand>
</feature>
<feature type="binding site" evidence="1">
    <location>
        <position position="181"/>
    </location>
    <ligand>
        <name>Mg(2+)</name>
        <dbReference type="ChEBI" id="CHEBI:18420"/>
    </ligand>
</feature>
<feature type="binding site" evidence="1">
    <location>
        <position position="181"/>
    </location>
    <ligand>
        <name>thiamine diphosphate</name>
        <dbReference type="ChEBI" id="CHEBI:58937"/>
    </ligand>
</feature>
<feature type="binding site" evidence="1">
    <location>
        <position position="288"/>
    </location>
    <ligand>
        <name>thiamine diphosphate</name>
        <dbReference type="ChEBI" id="CHEBI:58937"/>
    </ligand>
</feature>
<feature type="binding site" evidence="1">
    <location>
        <position position="370"/>
    </location>
    <ligand>
        <name>thiamine diphosphate</name>
        <dbReference type="ChEBI" id="CHEBI:58937"/>
    </ligand>
</feature>
<feature type="mutagenesis site" description="Loss of activity." evidence="1">
    <original>E</original>
    <variation>A</variation>
    <location>
        <position position="370"/>
    </location>
</feature>
<feature type="mutagenesis site" description="Slightly increases activity." evidence="1">
    <original>Y</original>
    <variation>A</variation>
    <location>
        <position position="392"/>
    </location>
</feature>
<feature type="mutagenesis site" description="Increases activity 3-fold." evidence="1">
    <original>Y</original>
    <variation>F</variation>
    <location>
        <position position="392"/>
    </location>
</feature>
<feature type="mutagenesis site" description="Loss of activity." evidence="1">
    <original>R</original>
    <variation>A</variation>
    <location>
        <position position="398"/>
    </location>
</feature>
<feature type="mutagenesis site" description="No effect on activity." evidence="1">
    <original>H</original>
    <variation>A</variation>
    <location>
        <position position="431"/>
    </location>
</feature>
<feature type="mutagenesis site" description="Loss of activity." evidence="1">
    <original>R</original>
    <variation>A</variation>
    <location>
        <position position="478"/>
    </location>
</feature>
<feature type="turn" evidence="9">
    <location>
        <begin position="5"/>
        <end position="7"/>
    </location>
</feature>
<feature type="helix" evidence="9">
    <location>
        <begin position="11"/>
        <end position="13"/>
    </location>
</feature>
<feature type="helix" evidence="9">
    <location>
        <begin position="17"/>
        <end position="20"/>
    </location>
</feature>
<feature type="helix" evidence="9">
    <location>
        <begin position="25"/>
        <end position="27"/>
    </location>
</feature>
<feature type="helix" evidence="9">
    <location>
        <begin position="28"/>
        <end position="42"/>
    </location>
</feature>
<feature type="helix" evidence="9">
    <location>
        <begin position="45"/>
        <end position="47"/>
    </location>
</feature>
<feature type="helix" evidence="9">
    <location>
        <begin position="50"/>
        <end position="54"/>
    </location>
</feature>
<feature type="helix" evidence="9">
    <location>
        <begin position="57"/>
        <end position="66"/>
    </location>
</feature>
<feature type="turn" evidence="9">
    <location>
        <begin position="69"/>
        <end position="71"/>
    </location>
</feature>
<feature type="strand" evidence="9">
    <location>
        <begin position="72"/>
        <end position="79"/>
    </location>
</feature>
<feature type="helix" evidence="9">
    <location>
        <begin position="83"/>
        <end position="87"/>
    </location>
</feature>
<feature type="turn" evidence="9">
    <location>
        <begin position="88"/>
        <end position="91"/>
    </location>
</feature>
<feature type="helix" evidence="9">
    <location>
        <begin position="92"/>
        <end position="97"/>
    </location>
</feature>
<feature type="turn" evidence="9">
    <location>
        <begin position="110"/>
        <end position="112"/>
    </location>
</feature>
<feature type="strand" evidence="9">
    <location>
        <begin position="121"/>
        <end position="124"/>
    </location>
</feature>
<feature type="helix" evidence="9">
    <location>
        <begin position="126"/>
        <end position="140"/>
    </location>
</feature>
<feature type="strand" evidence="9">
    <location>
        <begin position="146"/>
        <end position="151"/>
    </location>
</feature>
<feature type="helix" evidence="9">
    <location>
        <begin position="154"/>
        <end position="156"/>
    </location>
</feature>
<feature type="helix" evidence="9">
    <location>
        <begin position="158"/>
        <end position="170"/>
    </location>
</feature>
<feature type="strand" evidence="9">
    <location>
        <begin position="173"/>
        <end position="180"/>
    </location>
</feature>
<feature type="helix" evidence="9">
    <location>
        <begin position="240"/>
        <end position="245"/>
    </location>
</feature>
<feature type="strand" evidence="9">
    <location>
        <begin position="249"/>
        <end position="255"/>
    </location>
</feature>
<feature type="helix" evidence="9">
    <location>
        <begin position="259"/>
        <end position="271"/>
    </location>
</feature>
<feature type="strand" evidence="9">
    <location>
        <begin position="274"/>
        <end position="281"/>
    </location>
</feature>
<feature type="helix" evidence="9">
    <location>
        <begin position="321"/>
        <end position="335"/>
    </location>
</feature>
<feature type="strand" evidence="9">
    <location>
        <begin position="339"/>
        <end position="345"/>
    </location>
</feature>
<feature type="turn" evidence="9">
    <location>
        <begin position="347"/>
        <end position="351"/>
    </location>
</feature>
<feature type="helix" evidence="9">
    <location>
        <begin position="353"/>
        <end position="358"/>
    </location>
</feature>
<feature type="turn" evidence="9">
    <location>
        <begin position="360"/>
        <end position="362"/>
    </location>
</feature>
<feature type="strand" evidence="9">
    <location>
        <begin position="363"/>
        <end position="365"/>
    </location>
</feature>
<feature type="helix" evidence="9">
    <location>
        <begin position="370"/>
        <end position="382"/>
    </location>
</feature>
<feature type="strand" evidence="9">
    <location>
        <begin position="386"/>
        <end position="392"/>
    </location>
</feature>
<feature type="helix" evidence="9">
    <location>
        <begin position="395"/>
        <end position="399"/>
    </location>
</feature>
<feature type="helix" evidence="9">
    <location>
        <begin position="400"/>
        <end position="405"/>
    </location>
</feature>
<feature type="turn" evidence="9">
    <location>
        <begin position="406"/>
        <end position="411"/>
    </location>
</feature>
<feature type="strand" evidence="9">
    <location>
        <begin position="415"/>
        <end position="420"/>
    </location>
</feature>
<feature type="helix" evidence="9">
    <location>
        <begin position="429"/>
        <end position="431"/>
    </location>
</feature>
<feature type="helix" evidence="9">
    <location>
        <begin position="436"/>
        <end position="439"/>
    </location>
</feature>
<feature type="turn" evidence="9">
    <location>
        <begin position="440"/>
        <end position="442"/>
    </location>
</feature>
<feature type="strand" evidence="9">
    <location>
        <begin position="447"/>
        <end position="449"/>
    </location>
</feature>
<feature type="helix" evidence="9">
    <location>
        <begin position="454"/>
        <end position="466"/>
    </location>
</feature>
<feature type="strand" evidence="9">
    <location>
        <begin position="472"/>
        <end position="475"/>
    </location>
</feature>
<feature type="strand" evidence="9">
    <location>
        <begin position="478"/>
        <end position="480"/>
    </location>
</feature>
<feature type="strand" evidence="9">
    <location>
        <begin position="498"/>
        <end position="501"/>
    </location>
</feature>
<feature type="strand" evidence="9">
    <location>
        <begin position="504"/>
        <end position="512"/>
    </location>
</feature>
<feature type="helix" evidence="9">
    <location>
        <begin position="515"/>
        <end position="525"/>
    </location>
</feature>
<feature type="strand" evidence="9">
    <location>
        <begin position="528"/>
        <end position="531"/>
    </location>
</feature>
<feature type="strand" evidence="9">
    <location>
        <begin position="534"/>
        <end position="537"/>
    </location>
</feature>
<feature type="helix" evidence="9">
    <location>
        <begin position="540"/>
        <end position="549"/>
    </location>
</feature>
<feature type="strand" evidence="9">
    <location>
        <begin position="551"/>
        <end position="561"/>
    </location>
</feature>
<feature type="helix" evidence="9">
    <location>
        <begin position="565"/>
        <end position="575"/>
    </location>
</feature>
<feature type="strand" evidence="9">
    <location>
        <begin position="582"/>
        <end position="587"/>
    </location>
</feature>
<feature type="helix" evidence="9">
    <location>
        <begin position="597"/>
        <end position="603"/>
    </location>
</feature>
<feature type="helix" evidence="9">
    <location>
        <begin position="608"/>
        <end position="619"/>
    </location>
</feature>
<evidence type="ECO:0000269" key="1">
    <source>
    </source>
</evidence>
<evidence type="ECO:0000269" key="2">
    <source>
    </source>
</evidence>
<evidence type="ECO:0000269" key="3">
    <source>
    </source>
</evidence>
<evidence type="ECO:0000303" key="4">
    <source>
    </source>
</evidence>
<evidence type="ECO:0000303" key="5">
    <source>
    </source>
</evidence>
<evidence type="ECO:0000305" key="6"/>
<evidence type="ECO:0000305" key="7">
    <source>
    </source>
</evidence>
<evidence type="ECO:0000305" key="8">
    <source>
    </source>
</evidence>
<evidence type="ECO:0007829" key="9">
    <source>
        <dbReference type="PDB" id="2O1S"/>
    </source>
</evidence>